<keyword id="KW-0963">Cytoplasm</keyword>
<keyword id="KW-0694">RNA-binding</keyword>
<name>SSRP_RUTMC</name>
<sequence>MAKNNKKIKTSLNIIALNKKARHNYFIEQTLEAGLSLEGWEVKSLRDSKVQIKESYVILKNNELFLFGAHISPLKSVSTHVNSDSTRTRKLLLNRLEINRIKDNINQKGATIVPLKLYWARGKVKLEIGMAKGKKSHDKRQDIKLKDWQRDKQRTLKETNKIFNF</sequence>
<organism>
    <name type="scientific">Ruthia magnifica subsp. Calyptogena magnifica</name>
    <dbReference type="NCBI Taxonomy" id="413404"/>
    <lineage>
        <taxon>Bacteria</taxon>
        <taxon>Pseudomonadati</taxon>
        <taxon>Pseudomonadota</taxon>
        <taxon>Gammaproteobacteria</taxon>
        <taxon>Candidatus Pseudothioglobaceae</taxon>
        <taxon>Candidatus Ruthturnera</taxon>
    </lineage>
</organism>
<reference key="1">
    <citation type="journal article" date="2007" name="Science">
        <title>The Calyptogena magnifica chemoautotrophic symbiont genome.</title>
        <authorList>
            <person name="Newton I.L.G."/>
            <person name="Woyke T."/>
            <person name="Auchtung T.A."/>
            <person name="Dilly G.F."/>
            <person name="Dutton R.J."/>
            <person name="Fisher M.C."/>
            <person name="Fontanez K.M."/>
            <person name="Lau E."/>
            <person name="Stewart F.J."/>
            <person name="Richardson P.M."/>
            <person name="Barry K.W."/>
            <person name="Saunders E."/>
            <person name="Detter J.C."/>
            <person name="Wu D."/>
            <person name="Eisen J.A."/>
            <person name="Cavanaugh C.M."/>
        </authorList>
    </citation>
    <scope>NUCLEOTIDE SEQUENCE [LARGE SCALE GENOMIC DNA]</scope>
</reference>
<proteinExistence type="inferred from homology"/>
<dbReference type="EMBL" id="CP000488">
    <property type="protein sequence ID" value="ABL02148.1"/>
    <property type="molecule type" value="Genomic_DNA"/>
</dbReference>
<dbReference type="RefSeq" id="WP_011737773.1">
    <property type="nucleotide sequence ID" value="NC_008610.1"/>
</dbReference>
<dbReference type="SMR" id="A1AW41"/>
<dbReference type="STRING" id="413404.Rmag_0379"/>
<dbReference type="KEGG" id="rma:Rmag_0379"/>
<dbReference type="eggNOG" id="COG0691">
    <property type="taxonomic scope" value="Bacteria"/>
</dbReference>
<dbReference type="HOGENOM" id="CLU_108953_3_0_6"/>
<dbReference type="OrthoDB" id="9805462at2"/>
<dbReference type="Proteomes" id="UP000002587">
    <property type="component" value="Chromosome"/>
</dbReference>
<dbReference type="GO" id="GO:0005829">
    <property type="term" value="C:cytosol"/>
    <property type="evidence" value="ECO:0007669"/>
    <property type="project" value="TreeGrafter"/>
</dbReference>
<dbReference type="GO" id="GO:0003723">
    <property type="term" value="F:RNA binding"/>
    <property type="evidence" value="ECO:0007669"/>
    <property type="project" value="UniProtKB-UniRule"/>
</dbReference>
<dbReference type="GO" id="GO:0070929">
    <property type="term" value="P:trans-translation"/>
    <property type="evidence" value="ECO:0007669"/>
    <property type="project" value="UniProtKB-UniRule"/>
</dbReference>
<dbReference type="CDD" id="cd09294">
    <property type="entry name" value="SmpB"/>
    <property type="match status" value="1"/>
</dbReference>
<dbReference type="Gene3D" id="2.40.280.10">
    <property type="match status" value="1"/>
</dbReference>
<dbReference type="HAMAP" id="MF_00023">
    <property type="entry name" value="SmpB"/>
    <property type="match status" value="1"/>
</dbReference>
<dbReference type="InterPro" id="IPR023620">
    <property type="entry name" value="SmpB"/>
</dbReference>
<dbReference type="InterPro" id="IPR000037">
    <property type="entry name" value="SsrA-bd_prot"/>
</dbReference>
<dbReference type="InterPro" id="IPR020081">
    <property type="entry name" value="SsrA-bd_prot_CS"/>
</dbReference>
<dbReference type="NCBIfam" id="NF003843">
    <property type="entry name" value="PRK05422.1"/>
    <property type="match status" value="1"/>
</dbReference>
<dbReference type="NCBIfam" id="TIGR00086">
    <property type="entry name" value="smpB"/>
    <property type="match status" value="1"/>
</dbReference>
<dbReference type="PANTHER" id="PTHR30308:SF2">
    <property type="entry name" value="SSRA-BINDING PROTEIN"/>
    <property type="match status" value="1"/>
</dbReference>
<dbReference type="PANTHER" id="PTHR30308">
    <property type="entry name" value="TMRNA-BINDING COMPONENT OF TRANS-TRANSLATION TAGGING COMPLEX"/>
    <property type="match status" value="1"/>
</dbReference>
<dbReference type="Pfam" id="PF01668">
    <property type="entry name" value="SmpB"/>
    <property type="match status" value="1"/>
</dbReference>
<dbReference type="SUPFAM" id="SSF74982">
    <property type="entry name" value="Small protein B (SmpB)"/>
    <property type="match status" value="1"/>
</dbReference>
<dbReference type="PROSITE" id="PS01317">
    <property type="entry name" value="SSRP"/>
    <property type="match status" value="1"/>
</dbReference>
<evidence type="ECO:0000255" key="1">
    <source>
        <dbReference type="HAMAP-Rule" id="MF_00023"/>
    </source>
</evidence>
<feature type="chain" id="PRO_1000002133" description="SsrA-binding protein">
    <location>
        <begin position="1"/>
        <end position="165"/>
    </location>
</feature>
<protein>
    <recommendedName>
        <fullName evidence="1">SsrA-binding protein</fullName>
    </recommendedName>
    <alternativeName>
        <fullName evidence="1">Small protein B</fullName>
    </alternativeName>
</protein>
<comment type="function">
    <text evidence="1">Required for rescue of stalled ribosomes mediated by trans-translation. Binds to transfer-messenger RNA (tmRNA), required for stable association of tmRNA with ribosomes. tmRNA and SmpB together mimic tRNA shape, replacing the anticodon stem-loop with SmpB. tmRNA is encoded by the ssrA gene; the 2 termini fold to resemble tRNA(Ala) and it encodes a 'tag peptide', a short internal open reading frame. During trans-translation Ala-aminoacylated tmRNA acts like a tRNA, entering the A-site of stalled ribosomes, displacing the stalled mRNA. The ribosome then switches to translate the ORF on the tmRNA; the nascent peptide is terminated with the 'tag peptide' encoded by the tmRNA and targeted for degradation. The ribosome is freed to recommence translation, which seems to be the essential function of trans-translation.</text>
</comment>
<comment type="subcellular location">
    <subcellularLocation>
        <location evidence="1">Cytoplasm</location>
    </subcellularLocation>
    <text evidence="1">The tmRNA-SmpB complex associates with stalled 70S ribosomes.</text>
</comment>
<comment type="similarity">
    <text evidence="1">Belongs to the SmpB family.</text>
</comment>
<gene>
    <name evidence="1" type="primary">smpB</name>
    <name type="ordered locus">Rmag_0379</name>
</gene>
<accession>A1AW41</accession>